<keyword id="KW-0150">Chloroplast</keyword>
<keyword id="KW-0240">DNA-directed RNA polymerase</keyword>
<keyword id="KW-0548">Nucleotidyltransferase</keyword>
<keyword id="KW-0934">Plastid</keyword>
<keyword id="KW-0804">Transcription</keyword>
<keyword id="KW-0808">Transferase</keyword>
<accession>A7Y3I1</accession>
<name>RPOA_IPOPU</name>
<comment type="function">
    <text evidence="1">DNA-dependent RNA polymerase catalyzes the transcription of DNA into RNA using the four ribonucleoside triphosphates as substrates.</text>
</comment>
<comment type="catalytic activity">
    <reaction evidence="1">
        <text>RNA(n) + a ribonucleoside 5'-triphosphate = RNA(n+1) + diphosphate</text>
        <dbReference type="Rhea" id="RHEA:21248"/>
        <dbReference type="Rhea" id="RHEA-COMP:14527"/>
        <dbReference type="Rhea" id="RHEA-COMP:17342"/>
        <dbReference type="ChEBI" id="CHEBI:33019"/>
        <dbReference type="ChEBI" id="CHEBI:61557"/>
        <dbReference type="ChEBI" id="CHEBI:140395"/>
        <dbReference type="EC" id="2.7.7.6"/>
    </reaction>
</comment>
<comment type="subunit">
    <text evidence="1">In plastids the minimal PEP RNA polymerase catalytic core is composed of four subunits: alpha, beta, beta', and beta''. When a (nuclear-encoded) sigma factor is associated with the core the holoenzyme is formed, which can initiate transcription.</text>
</comment>
<comment type="subcellular location">
    <subcellularLocation>
        <location>Plastid</location>
        <location>Chloroplast</location>
    </subcellularLocation>
</comment>
<comment type="domain">
    <text evidence="1">The N-terminal domain is essential for RNAP assembly and basal transcription, whereas the C-terminal domain is involved in interaction with transcriptional regulators and with upstream promoter elements.</text>
</comment>
<comment type="similarity">
    <text evidence="1">Belongs to the RNA polymerase alpha chain family.</text>
</comment>
<reference key="1">
    <citation type="journal article" date="2007" name="BMC Plant Biol.">
        <title>Complete plastid genome sequences suggest strong selection for retention of photosynthetic genes in the parasitic plant genus Cuscuta.</title>
        <authorList>
            <person name="McNeal J.R."/>
            <person name="Kuehl J.V."/>
            <person name="Boore J.L."/>
            <person name="dePamphilis C.W."/>
        </authorList>
    </citation>
    <scope>NUCLEOTIDE SEQUENCE [LARGE SCALE GENOMIC DNA]</scope>
</reference>
<proteinExistence type="inferred from homology"/>
<gene>
    <name evidence="1" type="primary">rpoA</name>
</gene>
<dbReference type="EC" id="2.7.7.6" evidence="1"/>
<dbReference type="EMBL" id="EU118126">
    <property type="protein sequence ID" value="ABV02380.1"/>
    <property type="molecule type" value="Genomic_DNA"/>
</dbReference>
<dbReference type="RefSeq" id="YP_001468340.1">
    <property type="nucleotide sequence ID" value="NC_009808.1"/>
</dbReference>
<dbReference type="SMR" id="A7Y3I1"/>
<dbReference type="GeneID" id="5601291"/>
<dbReference type="GO" id="GO:0009507">
    <property type="term" value="C:chloroplast"/>
    <property type="evidence" value="ECO:0007669"/>
    <property type="project" value="UniProtKB-SubCell"/>
</dbReference>
<dbReference type="GO" id="GO:0000428">
    <property type="term" value="C:DNA-directed RNA polymerase complex"/>
    <property type="evidence" value="ECO:0007669"/>
    <property type="project" value="UniProtKB-KW"/>
</dbReference>
<dbReference type="GO" id="GO:0005739">
    <property type="term" value="C:mitochondrion"/>
    <property type="evidence" value="ECO:0007669"/>
    <property type="project" value="GOC"/>
</dbReference>
<dbReference type="GO" id="GO:0003677">
    <property type="term" value="F:DNA binding"/>
    <property type="evidence" value="ECO:0007669"/>
    <property type="project" value="UniProtKB-UniRule"/>
</dbReference>
<dbReference type="GO" id="GO:0003899">
    <property type="term" value="F:DNA-directed RNA polymerase activity"/>
    <property type="evidence" value="ECO:0007669"/>
    <property type="project" value="UniProtKB-UniRule"/>
</dbReference>
<dbReference type="GO" id="GO:0046983">
    <property type="term" value="F:protein dimerization activity"/>
    <property type="evidence" value="ECO:0007669"/>
    <property type="project" value="InterPro"/>
</dbReference>
<dbReference type="GO" id="GO:0006351">
    <property type="term" value="P:DNA-templated transcription"/>
    <property type="evidence" value="ECO:0007669"/>
    <property type="project" value="UniProtKB-UniRule"/>
</dbReference>
<dbReference type="CDD" id="cd06928">
    <property type="entry name" value="RNAP_alpha_NTD"/>
    <property type="match status" value="1"/>
</dbReference>
<dbReference type="FunFam" id="2.170.120.12:FF:000001">
    <property type="entry name" value="DNA-directed RNA polymerase subunit alpha"/>
    <property type="match status" value="1"/>
</dbReference>
<dbReference type="FunFam" id="3.30.1360.10:FF:000039">
    <property type="entry name" value="DNA-directed RNA polymerase subunit alpha"/>
    <property type="match status" value="1"/>
</dbReference>
<dbReference type="Gene3D" id="1.10.150.20">
    <property type="entry name" value="5' to 3' exonuclease, C-terminal subdomain"/>
    <property type="match status" value="1"/>
</dbReference>
<dbReference type="Gene3D" id="2.170.120.12">
    <property type="entry name" value="DNA-directed RNA polymerase, insert domain"/>
    <property type="match status" value="1"/>
</dbReference>
<dbReference type="Gene3D" id="3.30.1360.10">
    <property type="entry name" value="RNA polymerase, RBP11-like subunit"/>
    <property type="match status" value="1"/>
</dbReference>
<dbReference type="HAMAP" id="MF_00059">
    <property type="entry name" value="RNApol_bact_RpoA"/>
    <property type="match status" value="1"/>
</dbReference>
<dbReference type="InterPro" id="IPR011262">
    <property type="entry name" value="DNA-dir_RNA_pol_insert"/>
</dbReference>
<dbReference type="InterPro" id="IPR011263">
    <property type="entry name" value="DNA-dir_RNA_pol_RpoA/D/Rpb3"/>
</dbReference>
<dbReference type="InterPro" id="IPR011773">
    <property type="entry name" value="DNA-dir_RpoA"/>
</dbReference>
<dbReference type="InterPro" id="IPR036603">
    <property type="entry name" value="RBP11-like"/>
</dbReference>
<dbReference type="InterPro" id="IPR011260">
    <property type="entry name" value="RNAP_asu_C"/>
</dbReference>
<dbReference type="InterPro" id="IPR036643">
    <property type="entry name" value="RNApol_insert_sf"/>
</dbReference>
<dbReference type="NCBIfam" id="TIGR02027">
    <property type="entry name" value="rpoA"/>
    <property type="match status" value="1"/>
</dbReference>
<dbReference type="Pfam" id="PF01000">
    <property type="entry name" value="RNA_pol_A_bac"/>
    <property type="match status" value="1"/>
</dbReference>
<dbReference type="Pfam" id="PF03118">
    <property type="entry name" value="RNA_pol_A_CTD"/>
    <property type="match status" value="1"/>
</dbReference>
<dbReference type="Pfam" id="PF01193">
    <property type="entry name" value="RNA_pol_L"/>
    <property type="match status" value="1"/>
</dbReference>
<dbReference type="SMART" id="SM00662">
    <property type="entry name" value="RPOLD"/>
    <property type="match status" value="1"/>
</dbReference>
<dbReference type="SUPFAM" id="SSF47789">
    <property type="entry name" value="C-terminal domain of RNA polymerase alpha subunit"/>
    <property type="match status" value="1"/>
</dbReference>
<dbReference type="SUPFAM" id="SSF56553">
    <property type="entry name" value="Insert subdomain of RNA polymerase alpha subunit"/>
    <property type="match status" value="1"/>
</dbReference>
<dbReference type="SUPFAM" id="SSF55257">
    <property type="entry name" value="RBP11-like subunits of RNA polymerase"/>
    <property type="match status" value="1"/>
</dbReference>
<protein>
    <recommendedName>
        <fullName evidence="1">DNA-directed RNA polymerase subunit alpha</fullName>
        <shortName evidence="1">PEP</shortName>
        <ecNumber evidence="1">2.7.7.6</ecNumber>
    </recommendedName>
    <alternativeName>
        <fullName evidence="1">Plastid-encoded RNA polymerase subunit alpha</fullName>
        <shortName evidence="1">RNA polymerase subunit alpha</shortName>
    </alternativeName>
</protein>
<evidence type="ECO:0000255" key="1">
    <source>
        <dbReference type="HAMAP-Rule" id="MF_00059"/>
    </source>
</evidence>
<geneLocation type="chloroplast"/>
<sequence length="337" mass="38508">MIREKVTVSTRTLQWKCVESRTDSKRLYYGRFILSPLMKGQADTIGIAMRRALLGEIEGTCITRVKSEKAPHEYSTIAGIQESVHEILMNLKEIVLRSNLYGTCDASICVKGPGCVTAEDIILPPSVEIVDNTQHIAWLTEPIDFCIGLQIERNRGYILKTHHNFEDGSYPIDAVFMPVRNANHSIHSYGNGNEKQEILFLEIWTNGSLTPKEALHEASRNLIDLFIPFLHMEEENLHLEDGEHTIPLSPLSFHDKVAKLRKNKKKLALKSIFIDQLEFPPKIYNCLKKSNISTLLDLLNKSQEDLMKIEHFHIEDVKQILGILEKHFAIDLPKNQF</sequence>
<organism>
    <name type="scientific">Ipomoea purpurea</name>
    <name type="common">Common morning glory</name>
    <name type="synonym">Pharbitis purpurea</name>
    <dbReference type="NCBI Taxonomy" id="4121"/>
    <lineage>
        <taxon>Eukaryota</taxon>
        <taxon>Viridiplantae</taxon>
        <taxon>Streptophyta</taxon>
        <taxon>Embryophyta</taxon>
        <taxon>Tracheophyta</taxon>
        <taxon>Spermatophyta</taxon>
        <taxon>Magnoliopsida</taxon>
        <taxon>eudicotyledons</taxon>
        <taxon>Gunneridae</taxon>
        <taxon>Pentapetalae</taxon>
        <taxon>asterids</taxon>
        <taxon>lamiids</taxon>
        <taxon>Solanales</taxon>
        <taxon>Convolvulaceae</taxon>
        <taxon>Ipomoeeae</taxon>
        <taxon>Ipomoea</taxon>
    </lineage>
</organism>
<feature type="chain" id="PRO_0000323671" description="DNA-directed RNA polymerase subunit alpha">
    <location>
        <begin position="1"/>
        <end position="337"/>
    </location>
</feature>
<feature type="region of interest" description="Alpha N-terminal domain (alpha-NTD)" evidence="1">
    <location>
        <begin position="1"/>
        <end position="233"/>
    </location>
</feature>
<feature type="region of interest" description="Alpha C-terminal domain (alpha-CTD)" evidence="1">
    <location>
        <begin position="266"/>
        <end position="337"/>
    </location>
</feature>